<name>TCX3_ARATH</name>
<evidence type="ECO:0000250" key="1"/>
<evidence type="ECO:0000255" key="2">
    <source>
        <dbReference type="PROSITE-ProRule" id="PRU00971"/>
    </source>
</evidence>
<evidence type="ECO:0000256" key="3">
    <source>
        <dbReference type="SAM" id="MobiDB-lite"/>
    </source>
</evidence>
<evidence type="ECO:0000269" key="4">
    <source>
    </source>
</evidence>
<evidence type="ECO:0000269" key="5">
    <source>
    </source>
</evidence>
<evidence type="ECO:0000269" key="6">
    <source>
    </source>
</evidence>
<evidence type="ECO:0000305" key="7"/>
<gene>
    <name type="primary">TCX3</name>
    <name type="synonym">SOL1</name>
    <name type="ordered locus">At3g22760</name>
    <name type="ORF">MWI23.13</name>
</gene>
<comment type="function">
    <text evidence="1">Plays a role in development of both male and female reproductive tissues.</text>
</comment>
<comment type="subcellular location">
    <subcellularLocation>
        <location evidence="7">Nucleus</location>
    </subcellularLocation>
</comment>
<comment type="tissue specificity">
    <text evidence="4 5">Ubiquitous but expressed mostly in flowers and at significant levels in leaves. Detected with highest levels in developing ovules and microspores, and in petals.</text>
</comment>
<comment type="domain">
    <text>The cysteine-rich domain CRC binds zinc in vitro.</text>
</comment>
<comment type="disruption phenotype">
    <text evidence="6">No visible phenotype.</text>
</comment>
<comment type="similarity">
    <text evidence="7">Belongs to the lin-54 family.</text>
</comment>
<comment type="sequence caution" evidence="7">
    <conflict type="erroneous gene model prediction">
        <sequence resource="EMBL-CDS" id="BAB01251"/>
    </conflict>
</comment>
<sequence>MDTPEKSETQIGTPVSKLKVEDSPVFSYICNLSPIKTIKPIPITCPLSSLNYASPPSVFTSPHAVSHKESRFRSQKDVSASKEVGEEEALVGSEPEQSYKNDCNTPRVTNDVKDNGCGKDLQVMMDNVKKKSDTPDWETLIAATTELIYGSPRESEAFSCLLKKTSNSEARLRGSITATSVAVTNTDVVNNESESVDALSILHRGVRRRCLDFEVKGNNQQTLGESSSSCVVPSIGLHLNTIAMSSKDKNVANEYSFSGNIKVGVQSSLTPVLHSQHDIVRENESGKDSGQIIEVVPKSLASVDLTPISPKKKRRKSEQSGEGDSSCKRCNCKKSKCLKLYCECFAAGFYCIEPCSCINCFNKPIHKDVVLATRKQIESRNPLAFAPKVIRNSDSIIEVGEDASKTPASARHKRGCNCKKSNCLKKYCECYQGGVGCSINCRCEGCKNAFGRKDGSLFEQDEENETSGTPGTKKTQQNVELFKPAAPPSTPIPFRQPLAQLPISSNNRLLPPQSHFHHGAIGSSSSGIYNIRKPDMSLLSHSRIETITEDIDDMSENLIHSPITTLSPNSKRVSLSHLDSPESTPWRRNGGGRNLIRSFPTFPSLTPHH</sequence>
<accession>Q8L548</accession>
<accession>Q9LUI5</accession>
<accession>Q9M679</accession>
<reference key="1">
    <citation type="journal article" date="2000" name="Development">
        <title>TSO1 is a novel protein that modulates cytokinesis and cell expansion in Arabidopsis.</title>
        <authorList>
            <person name="Hauser B.A."/>
            <person name="He J.Q."/>
            <person name="Park S.O."/>
            <person name="Gasser C.S."/>
        </authorList>
    </citation>
    <scope>NUCLEOTIDE SEQUENCE [MRNA]</scope>
    <scope>TISSUE SPECIFICITY</scope>
    <source>
        <strain>cv. Landsberg erecta</strain>
    </source>
</reference>
<reference key="2">
    <citation type="journal article" date="2000" name="DNA Res.">
        <title>Structural analysis of Arabidopsis thaliana chromosome 3. I. Sequence features of the regions of 4,504,864 bp covered by sixty P1 and TAC clones.</title>
        <authorList>
            <person name="Sato S."/>
            <person name="Nakamura Y."/>
            <person name="Kaneko T."/>
            <person name="Katoh T."/>
            <person name="Asamizu E."/>
            <person name="Tabata S."/>
        </authorList>
    </citation>
    <scope>NUCLEOTIDE SEQUENCE [LARGE SCALE GENOMIC DNA]</scope>
    <source>
        <strain>cv. Columbia</strain>
    </source>
</reference>
<reference key="3">
    <citation type="journal article" date="2017" name="Plant J.">
        <title>Araport11: a complete reannotation of the Arabidopsis thaliana reference genome.</title>
        <authorList>
            <person name="Cheng C.Y."/>
            <person name="Krishnakumar V."/>
            <person name="Chan A.P."/>
            <person name="Thibaud-Nissen F."/>
            <person name="Schobel S."/>
            <person name="Town C.D."/>
        </authorList>
    </citation>
    <scope>GENOME REANNOTATION</scope>
    <source>
        <strain>cv. Columbia</strain>
    </source>
</reference>
<reference key="4">
    <citation type="journal article" date="2003" name="Science">
        <title>Empirical analysis of transcriptional activity in the Arabidopsis genome.</title>
        <authorList>
            <person name="Yamada K."/>
            <person name="Lim J."/>
            <person name="Dale J.M."/>
            <person name="Chen H."/>
            <person name="Shinn P."/>
            <person name="Palm C.J."/>
            <person name="Southwick A.M."/>
            <person name="Wu H.C."/>
            <person name="Kim C.J."/>
            <person name="Nguyen M."/>
            <person name="Pham P.K."/>
            <person name="Cheuk R.F."/>
            <person name="Karlin-Newmann G."/>
            <person name="Liu S.X."/>
            <person name="Lam B."/>
            <person name="Sakano H."/>
            <person name="Wu T."/>
            <person name="Yu G."/>
            <person name="Miranda M."/>
            <person name="Quach H.L."/>
            <person name="Tripp M."/>
            <person name="Chang C.H."/>
            <person name="Lee J.M."/>
            <person name="Toriumi M.J."/>
            <person name="Chan M.M."/>
            <person name="Tang C.C."/>
            <person name="Onodera C.S."/>
            <person name="Deng J.M."/>
            <person name="Akiyama K."/>
            <person name="Ansari Y."/>
            <person name="Arakawa T."/>
            <person name="Banh J."/>
            <person name="Banno F."/>
            <person name="Bowser L."/>
            <person name="Brooks S.Y."/>
            <person name="Carninci P."/>
            <person name="Chao Q."/>
            <person name="Choy N."/>
            <person name="Enju A."/>
            <person name="Goldsmith A.D."/>
            <person name="Gurjal M."/>
            <person name="Hansen N.F."/>
            <person name="Hayashizaki Y."/>
            <person name="Johnson-Hopson C."/>
            <person name="Hsuan V.W."/>
            <person name="Iida K."/>
            <person name="Karnes M."/>
            <person name="Khan S."/>
            <person name="Koesema E."/>
            <person name="Ishida J."/>
            <person name="Jiang P.X."/>
            <person name="Jones T."/>
            <person name="Kawai J."/>
            <person name="Kamiya A."/>
            <person name="Meyers C."/>
            <person name="Nakajima M."/>
            <person name="Narusaka M."/>
            <person name="Seki M."/>
            <person name="Sakurai T."/>
            <person name="Satou M."/>
            <person name="Tamse R."/>
            <person name="Vaysberg M."/>
            <person name="Wallender E.K."/>
            <person name="Wong C."/>
            <person name="Yamamura Y."/>
            <person name="Yuan S."/>
            <person name="Shinozaki K."/>
            <person name="Davis R.W."/>
            <person name="Theologis A."/>
            <person name="Ecker J.R."/>
        </authorList>
    </citation>
    <scope>NUCLEOTIDE SEQUENCE [LARGE SCALE MRNA]</scope>
    <source>
        <strain>cv. Columbia</strain>
    </source>
</reference>
<reference key="5">
    <citation type="journal article" date="2007" name="J. Exp. Bot.">
        <title>The conserved cysteine-rich domain of a tesmin/TSO1-like protein binds zinc in vitro and TSO1 is required for both male and female fertility in Arabidopsis thaliana.</title>
        <authorList>
            <person name="Andersen S.U."/>
            <person name="Algreen-Petersen R.G."/>
            <person name="Hoedl M."/>
            <person name="Jurkiewicz A."/>
            <person name="Cvitanich C."/>
            <person name="Braunschweig U."/>
            <person name="Schauser L."/>
            <person name="Oh S.A."/>
            <person name="Twell D."/>
            <person name="Jensen E.O."/>
        </authorList>
    </citation>
    <scope>GENE FAMILY</scope>
    <scope>NOMENCLATURE</scope>
    <scope>ZINC-BINDING</scope>
    <scope>TISSUE SPECIFICITY</scope>
</reference>
<reference key="6">
    <citation type="journal article" date="2011" name="PLoS Genet.">
        <title>Recessive antimorphic alleles overcome functionally redundant loci to reveal TSO1 function in Arabidopsis flowers and meristems.</title>
        <authorList>
            <person name="Sijacic P."/>
            <person name="Wang W."/>
            <person name="Liu Z."/>
        </authorList>
    </citation>
    <scope>DISRUPTION PHENOTYPE</scope>
</reference>
<dbReference type="EMBL" id="AF205142">
    <property type="protein sequence ID" value="AAF69125.1"/>
    <property type="molecule type" value="mRNA"/>
</dbReference>
<dbReference type="EMBL" id="AB022223">
    <property type="protein sequence ID" value="BAB01251.1"/>
    <property type="status" value="ALT_SEQ"/>
    <property type="molecule type" value="Genomic_DNA"/>
</dbReference>
<dbReference type="EMBL" id="CP002686">
    <property type="protein sequence ID" value="AEE76674.1"/>
    <property type="molecule type" value="Genomic_DNA"/>
</dbReference>
<dbReference type="EMBL" id="AY099653">
    <property type="protein sequence ID" value="AAM20504.1"/>
    <property type="molecule type" value="mRNA"/>
</dbReference>
<dbReference type="EMBL" id="AY128837">
    <property type="protein sequence ID" value="AAM91237.1"/>
    <property type="molecule type" value="mRNA"/>
</dbReference>
<dbReference type="RefSeq" id="NP_566717.1">
    <property type="nucleotide sequence ID" value="NM_113175.2"/>
</dbReference>
<dbReference type="SMR" id="Q8L548"/>
<dbReference type="FunCoup" id="Q8L548">
    <property type="interactions" value="138"/>
</dbReference>
<dbReference type="STRING" id="3702.Q8L548"/>
<dbReference type="PaxDb" id="3702-AT3G22760.1"/>
<dbReference type="EnsemblPlants" id="AT3G22760.1">
    <property type="protein sequence ID" value="AT3G22760.1"/>
    <property type="gene ID" value="AT3G22760"/>
</dbReference>
<dbReference type="GeneID" id="821847"/>
<dbReference type="Gramene" id="AT3G22760.1">
    <property type="protein sequence ID" value="AT3G22760.1"/>
    <property type="gene ID" value="AT3G22760"/>
</dbReference>
<dbReference type="KEGG" id="ath:AT3G22760"/>
<dbReference type="Araport" id="AT3G22760"/>
<dbReference type="TAIR" id="AT3G22760">
    <property type="gene designation" value="SOL1"/>
</dbReference>
<dbReference type="eggNOG" id="KOG1171">
    <property type="taxonomic scope" value="Eukaryota"/>
</dbReference>
<dbReference type="HOGENOM" id="CLU_012297_1_0_1"/>
<dbReference type="InParanoid" id="Q8L548"/>
<dbReference type="OMA" id="HKESRFR"/>
<dbReference type="PhylomeDB" id="Q8L548"/>
<dbReference type="PRO" id="PR:Q8L548"/>
<dbReference type="Proteomes" id="UP000006548">
    <property type="component" value="Chromosome 3"/>
</dbReference>
<dbReference type="ExpressionAtlas" id="Q8L548">
    <property type="expression patterns" value="baseline and differential"/>
</dbReference>
<dbReference type="GO" id="GO:0005634">
    <property type="term" value="C:nucleus"/>
    <property type="evidence" value="ECO:0007669"/>
    <property type="project" value="UniProtKB-SubCell"/>
</dbReference>
<dbReference type="GO" id="GO:0003700">
    <property type="term" value="F:DNA-binding transcription factor activity"/>
    <property type="evidence" value="ECO:0000250"/>
    <property type="project" value="TAIR"/>
</dbReference>
<dbReference type="GO" id="GO:0046872">
    <property type="term" value="F:metal ion binding"/>
    <property type="evidence" value="ECO:0007669"/>
    <property type="project" value="UniProtKB-KW"/>
</dbReference>
<dbReference type="GO" id="GO:0000976">
    <property type="term" value="F:transcription cis-regulatory region binding"/>
    <property type="evidence" value="ECO:0000353"/>
    <property type="project" value="TAIR"/>
</dbReference>
<dbReference type="GO" id="GO:0010375">
    <property type="term" value="P:stomatal complex patterning"/>
    <property type="evidence" value="ECO:0000316"/>
    <property type="project" value="TAIR"/>
</dbReference>
<dbReference type="GO" id="GO:0010440">
    <property type="term" value="P:stomatal lineage progression"/>
    <property type="evidence" value="ECO:0000316"/>
    <property type="project" value="TAIR"/>
</dbReference>
<dbReference type="InterPro" id="IPR005172">
    <property type="entry name" value="CRC"/>
</dbReference>
<dbReference type="InterPro" id="IPR033467">
    <property type="entry name" value="Tesmin/TSO1-like_CXC"/>
</dbReference>
<dbReference type="InterPro" id="IPR044522">
    <property type="entry name" value="TSO1-like"/>
</dbReference>
<dbReference type="PANTHER" id="PTHR46159">
    <property type="entry name" value="PROTEIN TESMIN/TSO1-LIKE CXC 2"/>
    <property type="match status" value="1"/>
</dbReference>
<dbReference type="PANTHER" id="PTHR46159:SF12">
    <property type="entry name" value="PROTEIN TESMIN_TSO1-LIKE CXC 3-RELATED"/>
    <property type="match status" value="1"/>
</dbReference>
<dbReference type="Pfam" id="PF03638">
    <property type="entry name" value="TCR"/>
    <property type="match status" value="2"/>
</dbReference>
<dbReference type="SMART" id="SM01114">
    <property type="entry name" value="CXC"/>
    <property type="match status" value="2"/>
</dbReference>
<dbReference type="PROSITE" id="PS51634">
    <property type="entry name" value="CRC"/>
    <property type="match status" value="1"/>
</dbReference>
<protein>
    <recommendedName>
        <fullName>Protein tesmin/TSO1-like CXC 3</fullName>
        <shortName>AtTCX3</shortName>
    </recommendedName>
    <alternativeName>
        <fullName>Protein TSO1-like 1</fullName>
        <shortName>Protein SOL1</shortName>
    </alternativeName>
</protein>
<feature type="chain" id="PRO_0000418168" description="Protein tesmin/TSO1-like CXC 3">
    <location>
        <begin position="1"/>
        <end position="609"/>
    </location>
</feature>
<feature type="domain" description="CRC" evidence="2">
    <location>
        <begin position="326"/>
        <end position="451"/>
    </location>
</feature>
<feature type="region of interest" description="Disordered" evidence="3">
    <location>
        <begin position="69"/>
        <end position="102"/>
    </location>
</feature>
<feature type="region of interest" description="Disordered" evidence="3">
    <location>
        <begin position="307"/>
        <end position="328"/>
    </location>
</feature>
<feature type="region of interest" description="Disordered" evidence="3">
    <location>
        <begin position="457"/>
        <end position="477"/>
    </location>
</feature>
<feature type="region of interest" description="Disordered" evidence="3">
    <location>
        <begin position="569"/>
        <end position="609"/>
    </location>
</feature>
<feature type="compositionally biased region" description="Basic and acidic residues" evidence="3">
    <location>
        <begin position="69"/>
        <end position="84"/>
    </location>
</feature>
<feature type="compositionally biased region" description="Polar residues" evidence="3">
    <location>
        <begin position="466"/>
        <end position="477"/>
    </location>
</feature>
<feature type="sequence conflict" description="In Ref. 1; AAF69125." evidence="7" ref="1">
    <original>T</original>
    <variation>L</variation>
    <location>
        <position position="109"/>
    </location>
</feature>
<feature type="sequence conflict" description="In Ref. 1; AAF69125." evidence="7" ref="1">
    <original>G</original>
    <variation>E</variation>
    <location>
        <position position="591"/>
    </location>
</feature>
<proteinExistence type="evidence at protein level"/>
<organism>
    <name type="scientific">Arabidopsis thaliana</name>
    <name type="common">Mouse-ear cress</name>
    <dbReference type="NCBI Taxonomy" id="3702"/>
    <lineage>
        <taxon>Eukaryota</taxon>
        <taxon>Viridiplantae</taxon>
        <taxon>Streptophyta</taxon>
        <taxon>Embryophyta</taxon>
        <taxon>Tracheophyta</taxon>
        <taxon>Spermatophyta</taxon>
        <taxon>Magnoliopsida</taxon>
        <taxon>eudicotyledons</taxon>
        <taxon>Gunneridae</taxon>
        <taxon>Pentapetalae</taxon>
        <taxon>rosids</taxon>
        <taxon>malvids</taxon>
        <taxon>Brassicales</taxon>
        <taxon>Brassicaceae</taxon>
        <taxon>Camelineae</taxon>
        <taxon>Arabidopsis</taxon>
    </lineage>
</organism>
<keyword id="KW-0217">Developmental protein</keyword>
<keyword id="KW-0479">Metal-binding</keyword>
<keyword id="KW-0539">Nucleus</keyword>
<keyword id="KW-1185">Reference proteome</keyword>
<keyword id="KW-0862">Zinc</keyword>